<keyword id="KW-0240">DNA-directed RNA polymerase</keyword>
<keyword id="KW-0460">Magnesium</keyword>
<keyword id="KW-0479">Metal-binding</keyword>
<keyword id="KW-0548">Nucleotidyltransferase</keyword>
<keyword id="KW-1185">Reference proteome</keyword>
<keyword id="KW-0804">Transcription</keyword>
<keyword id="KW-0808">Transferase</keyword>
<keyword id="KW-0862">Zinc</keyword>
<reference key="1">
    <citation type="submission" date="2008-04" db="EMBL/GenBank/DDBJ databases">
        <title>Complete sequence of chromosome of Exiguobacterium sibiricum 255-15.</title>
        <authorList>
            <consortium name="US DOE Joint Genome Institute"/>
            <person name="Copeland A."/>
            <person name="Lucas S."/>
            <person name="Lapidus A."/>
            <person name="Glavina del Rio T."/>
            <person name="Dalin E."/>
            <person name="Tice H."/>
            <person name="Bruce D."/>
            <person name="Goodwin L."/>
            <person name="Pitluck S."/>
            <person name="Kiss H."/>
            <person name="Chertkov O."/>
            <person name="Monk C."/>
            <person name="Brettin T."/>
            <person name="Detter J.C."/>
            <person name="Han C."/>
            <person name="Kuske C.R."/>
            <person name="Schmutz J."/>
            <person name="Larimer F."/>
            <person name="Land M."/>
            <person name="Hauser L."/>
            <person name="Kyrpides N."/>
            <person name="Mikhailova N."/>
            <person name="Vishnivetskaya T."/>
            <person name="Rodrigues D.F."/>
            <person name="Gilichinsky D."/>
            <person name="Tiedje J."/>
            <person name="Richardson P."/>
        </authorList>
    </citation>
    <scope>NUCLEOTIDE SEQUENCE [LARGE SCALE GENOMIC DNA]</scope>
    <source>
        <strain>DSM 17290 / CCUG 55495 / CIP 109462 / JCM 13490 / 255-15</strain>
    </source>
</reference>
<sequence>MVDVNRFEYMKIGLASPEKIRSWSFGEVKKPETINYRTLKPEKDGLFCERIFGPTKDWECYCGKYKRIRYKGIICDRCGVEVTKSKVRRERMGHIELAAPVSHIWYFKGIPSRMGLVLDMSPRALEEIIYFASYVVTDPGESTLEKKQLLSEKEYRAYREKFGSSFTAEMGAEAVRKLLRDVELEKEVAGLREDLRMIQGQRRTRAIKRLEVLDAFRNSGNNPEWMVLEVLPVIPPELRPMVQLDGGRFATSDLNDLYRRVINRNNRLKRLLDLGAPNIIVQNEKRMLQEAVDALIDNGRRGRPVTGPGNRPLKSLSHMLKGKQGRFRQNLLGKRVDYSGRSVIVVGPNLKMYQCGLPKEMALELFKPFVMKELVSRGIAPNIKSAKRKIERVQPEIWDVLEEVIREHPVLLNRAPTLHRLGIQAFEPTLVEGRAIRLHPLVCTAYNADFDGDQMAVHVPLSAEAQAEARLLMLAAQNILNPKDGKPVVTPSQDMVLGNYYLTLERENAIGEGKIFSTVNEALIAYQNGYVHFHTRVAIPAGVLKNPTFTEAQNEKLLVTTVGKLIFNEILPTTFPYLNEPSMNNLQEATPDQYFLEKGTDIAAEIKSRPIIEPFKKGFLGNVIAEVFKRFETTETSRMLDRMKNLGFKHSTRAGITVGIADIIVLPDKQEILVEAQDNVDRVMKSYRRGLITEEERYERVVKSWNDAKDEIQSRLMKSLNRLNPIFMMSDSGARGNASNFTQLAGMRGLMAAPSGRIIELPIKSSFREGLTVQEYFISTHGARKGLADTALKTADSGYLTRRLVDVAQDVIIREDDCGTDRGIRVTALREGTEEIENLYDRLVGRTAFEKVVHPETGAVLVSTNELIDEDIARAITDAGIDNVEIRTAFTCNTSHGVCKKCYGRNLATGNDVEVGEAVGIIAAQSIGEPGTQLTMRTFHTGGVAGDDITQGLPRIQELFEARNPKGQAVISEIDGQVIDFTESRDKRELTIQGLSETRTYTIPFGSRLRVQLGEEVKAGQVFTEGSIDPKELLNVKGVSGVQNYLLQEVQKVYRMQGVEIGDKHVEVMVRQMIRRVRVIESGETSLLPGSLVDISTFKEACKEALRAGKALASAKPVLLGITKASLETDSFLSAASFQETTRVLTDAAIKGKSDYLRGLKENVIIGKLVPAGTGMTRYRQIGLEIAGEAPVEADSPVE</sequence>
<gene>
    <name evidence="1" type="primary">rpoC</name>
    <name type="ordered locus">Exig_0089</name>
</gene>
<protein>
    <recommendedName>
        <fullName evidence="1">DNA-directed RNA polymerase subunit beta'</fullName>
        <shortName evidence="1">RNAP subunit beta'</shortName>
        <ecNumber evidence="1">2.7.7.6</ecNumber>
    </recommendedName>
    <alternativeName>
        <fullName evidence="1">RNA polymerase subunit beta'</fullName>
    </alternativeName>
    <alternativeName>
        <fullName evidence="1">Transcriptase subunit beta'</fullName>
    </alternativeName>
</protein>
<organism>
    <name type="scientific">Exiguobacterium sibiricum (strain DSM 17290 / CCUG 55495 / CIP 109462 / JCM 13490 / 255-15)</name>
    <dbReference type="NCBI Taxonomy" id="262543"/>
    <lineage>
        <taxon>Bacteria</taxon>
        <taxon>Bacillati</taxon>
        <taxon>Bacillota</taxon>
        <taxon>Bacilli</taxon>
        <taxon>Bacillales</taxon>
        <taxon>Bacillales Family XII. Incertae Sedis</taxon>
        <taxon>Exiguobacterium</taxon>
    </lineage>
</organism>
<evidence type="ECO:0000255" key="1">
    <source>
        <dbReference type="HAMAP-Rule" id="MF_01322"/>
    </source>
</evidence>
<proteinExistence type="inferred from homology"/>
<comment type="function">
    <text evidence="1">DNA-dependent RNA polymerase catalyzes the transcription of DNA into RNA using the four ribonucleoside triphosphates as substrates.</text>
</comment>
<comment type="catalytic activity">
    <reaction evidence="1">
        <text>RNA(n) + a ribonucleoside 5'-triphosphate = RNA(n+1) + diphosphate</text>
        <dbReference type="Rhea" id="RHEA:21248"/>
        <dbReference type="Rhea" id="RHEA-COMP:14527"/>
        <dbReference type="Rhea" id="RHEA-COMP:17342"/>
        <dbReference type="ChEBI" id="CHEBI:33019"/>
        <dbReference type="ChEBI" id="CHEBI:61557"/>
        <dbReference type="ChEBI" id="CHEBI:140395"/>
        <dbReference type="EC" id="2.7.7.6"/>
    </reaction>
</comment>
<comment type="cofactor">
    <cofactor evidence="1">
        <name>Mg(2+)</name>
        <dbReference type="ChEBI" id="CHEBI:18420"/>
    </cofactor>
    <text evidence="1">Binds 1 Mg(2+) ion per subunit.</text>
</comment>
<comment type="cofactor">
    <cofactor evidence="1">
        <name>Zn(2+)</name>
        <dbReference type="ChEBI" id="CHEBI:29105"/>
    </cofactor>
    <text evidence="1">Binds 2 Zn(2+) ions per subunit.</text>
</comment>
<comment type="subunit">
    <text evidence="1">The RNAP catalytic core consists of 2 alpha, 1 beta, 1 beta' and 1 omega subunit. When a sigma factor is associated with the core the holoenzyme is formed, which can initiate transcription.</text>
</comment>
<comment type="similarity">
    <text evidence="1">Belongs to the RNA polymerase beta' chain family.</text>
</comment>
<accession>B1YGU3</accession>
<feature type="chain" id="PRO_0000353363" description="DNA-directed RNA polymerase subunit beta'">
    <location>
        <begin position="1"/>
        <end position="1199"/>
    </location>
</feature>
<feature type="binding site" evidence="1">
    <location>
        <position position="60"/>
    </location>
    <ligand>
        <name>Zn(2+)</name>
        <dbReference type="ChEBI" id="CHEBI:29105"/>
        <label>1</label>
    </ligand>
</feature>
<feature type="binding site" evidence="1">
    <location>
        <position position="62"/>
    </location>
    <ligand>
        <name>Zn(2+)</name>
        <dbReference type="ChEBI" id="CHEBI:29105"/>
        <label>1</label>
    </ligand>
</feature>
<feature type="binding site" evidence="1">
    <location>
        <position position="75"/>
    </location>
    <ligand>
        <name>Zn(2+)</name>
        <dbReference type="ChEBI" id="CHEBI:29105"/>
        <label>1</label>
    </ligand>
</feature>
<feature type="binding site" evidence="1">
    <location>
        <position position="78"/>
    </location>
    <ligand>
        <name>Zn(2+)</name>
        <dbReference type="ChEBI" id="CHEBI:29105"/>
        <label>1</label>
    </ligand>
</feature>
<feature type="binding site" evidence="1">
    <location>
        <position position="449"/>
    </location>
    <ligand>
        <name>Mg(2+)</name>
        <dbReference type="ChEBI" id="CHEBI:18420"/>
    </ligand>
</feature>
<feature type="binding site" evidence="1">
    <location>
        <position position="451"/>
    </location>
    <ligand>
        <name>Mg(2+)</name>
        <dbReference type="ChEBI" id="CHEBI:18420"/>
    </ligand>
</feature>
<feature type="binding site" evidence="1">
    <location>
        <position position="453"/>
    </location>
    <ligand>
        <name>Mg(2+)</name>
        <dbReference type="ChEBI" id="CHEBI:18420"/>
    </ligand>
</feature>
<feature type="binding site" evidence="1">
    <location>
        <position position="818"/>
    </location>
    <ligand>
        <name>Zn(2+)</name>
        <dbReference type="ChEBI" id="CHEBI:29105"/>
        <label>2</label>
    </ligand>
</feature>
<feature type="binding site" evidence="1">
    <location>
        <position position="892"/>
    </location>
    <ligand>
        <name>Zn(2+)</name>
        <dbReference type="ChEBI" id="CHEBI:29105"/>
        <label>2</label>
    </ligand>
</feature>
<feature type="binding site" evidence="1">
    <location>
        <position position="899"/>
    </location>
    <ligand>
        <name>Zn(2+)</name>
        <dbReference type="ChEBI" id="CHEBI:29105"/>
        <label>2</label>
    </ligand>
</feature>
<feature type="binding site" evidence="1">
    <location>
        <position position="902"/>
    </location>
    <ligand>
        <name>Zn(2+)</name>
        <dbReference type="ChEBI" id="CHEBI:29105"/>
        <label>2</label>
    </ligand>
</feature>
<dbReference type="EC" id="2.7.7.6" evidence="1"/>
<dbReference type="EMBL" id="CP001022">
    <property type="protein sequence ID" value="ACB59576.1"/>
    <property type="molecule type" value="Genomic_DNA"/>
</dbReference>
<dbReference type="RefSeq" id="WP_012369002.1">
    <property type="nucleotide sequence ID" value="NC_010556.1"/>
</dbReference>
<dbReference type="SMR" id="B1YGU3"/>
<dbReference type="STRING" id="262543.Exig_0089"/>
<dbReference type="KEGG" id="esi:Exig_0089"/>
<dbReference type="eggNOG" id="COG0086">
    <property type="taxonomic scope" value="Bacteria"/>
</dbReference>
<dbReference type="HOGENOM" id="CLU_000524_3_1_9"/>
<dbReference type="OrthoDB" id="9815296at2"/>
<dbReference type="Proteomes" id="UP000001681">
    <property type="component" value="Chromosome"/>
</dbReference>
<dbReference type="GO" id="GO:0000428">
    <property type="term" value="C:DNA-directed RNA polymerase complex"/>
    <property type="evidence" value="ECO:0007669"/>
    <property type="project" value="UniProtKB-KW"/>
</dbReference>
<dbReference type="GO" id="GO:0003677">
    <property type="term" value="F:DNA binding"/>
    <property type="evidence" value="ECO:0007669"/>
    <property type="project" value="UniProtKB-UniRule"/>
</dbReference>
<dbReference type="GO" id="GO:0003899">
    <property type="term" value="F:DNA-directed RNA polymerase activity"/>
    <property type="evidence" value="ECO:0007669"/>
    <property type="project" value="UniProtKB-UniRule"/>
</dbReference>
<dbReference type="GO" id="GO:0000287">
    <property type="term" value="F:magnesium ion binding"/>
    <property type="evidence" value="ECO:0007669"/>
    <property type="project" value="UniProtKB-UniRule"/>
</dbReference>
<dbReference type="GO" id="GO:0008270">
    <property type="term" value="F:zinc ion binding"/>
    <property type="evidence" value="ECO:0007669"/>
    <property type="project" value="UniProtKB-UniRule"/>
</dbReference>
<dbReference type="GO" id="GO:0006351">
    <property type="term" value="P:DNA-templated transcription"/>
    <property type="evidence" value="ECO:0007669"/>
    <property type="project" value="UniProtKB-UniRule"/>
</dbReference>
<dbReference type="CDD" id="cd02655">
    <property type="entry name" value="RNAP_beta'_C"/>
    <property type="match status" value="1"/>
</dbReference>
<dbReference type="CDD" id="cd01609">
    <property type="entry name" value="RNAP_beta'_N"/>
    <property type="match status" value="1"/>
</dbReference>
<dbReference type="FunFam" id="1.10.150.390:FF:000002">
    <property type="entry name" value="DNA-directed RNA polymerase subunit beta"/>
    <property type="match status" value="1"/>
</dbReference>
<dbReference type="FunFam" id="4.10.860.120:FF:000001">
    <property type="entry name" value="DNA-directed RNA polymerase subunit beta"/>
    <property type="match status" value="1"/>
</dbReference>
<dbReference type="Gene3D" id="1.10.132.30">
    <property type="match status" value="1"/>
</dbReference>
<dbReference type="Gene3D" id="1.10.150.390">
    <property type="match status" value="1"/>
</dbReference>
<dbReference type="Gene3D" id="1.10.1790.20">
    <property type="match status" value="1"/>
</dbReference>
<dbReference type="Gene3D" id="1.10.40.90">
    <property type="match status" value="1"/>
</dbReference>
<dbReference type="Gene3D" id="2.40.40.20">
    <property type="match status" value="1"/>
</dbReference>
<dbReference type="Gene3D" id="2.40.50.100">
    <property type="match status" value="1"/>
</dbReference>
<dbReference type="Gene3D" id="4.10.860.120">
    <property type="entry name" value="RNA polymerase II, clamp domain"/>
    <property type="match status" value="1"/>
</dbReference>
<dbReference type="Gene3D" id="1.10.274.100">
    <property type="entry name" value="RNA polymerase Rpb1, domain 3"/>
    <property type="match status" value="1"/>
</dbReference>
<dbReference type="HAMAP" id="MF_01322">
    <property type="entry name" value="RNApol_bact_RpoC"/>
    <property type="match status" value="1"/>
</dbReference>
<dbReference type="InterPro" id="IPR045867">
    <property type="entry name" value="DNA-dir_RpoC_beta_prime"/>
</dbReference>
<dbReference type="InterPro" id="IPR012754">
    <property type="entry name" value="DNA-dir_RpoC_beta_prime_bact"/>
</dbReference>
<dbReference type="InterPro" id="IPR000722">
    <property type="entry name" value="RNA_pol_asu"/>
</dbReference>
<dbReference type="InterPro" id="IPR006592">
    <property type="entry name" value="RNA_pol_N"/>
</dbReference>
<dbReference type="InterPro" id="IPR007080">
    <property type="entry name" value="RNA_pol_Rpb1_1"/>
</dbReference>
<dbReference type="InterPro" id="IPR007066">
    <property type="entry name" value="RNA_pol_Rpb1_3"/>
</dbReference>
<dbReference type="InterPro" id="IPR042102">
    <property type="entry name" value="RNA_pol_Rpb1_3_sf"/>
</dbReference>
<dbReference type="InterPro" id="IPR007083">
    <property type="entry name" value="RNA_pol_Rpb1_4"/>
</dbReference>
<dbReference type="InterPro" id="IPR007081">
    <property type="entry name" value="RNA_pol_Rpb1_5"/>
</dbReference>
<dbReference type="InterPro" id="IPR044893">
    <property type="entry name" value="RNA_pol_Rpb1_clamp_domain"/>
</dbReference>
<dbReference type="InterPro" id="IPR038120">
    <property type="entry name" value="Rpb1_funnel_sf"/>
</dbReference>
<dbReference type="NCBIfam" id="TIGR02386">
    <property type="entry name" value="rpoC_TIGR"/>
    <property type="match status" value="1"/>
</dbReference>
<dbReference type="PANTHER" id="PTHR19376">
    <property type="entry name" value="DNA-DIRECTED RNA POLYMERASE"/>
    <property type="match status" value="1"/>
</dbReference>
<dbReference type="PANTHER" id="PTHR19376:SF54">
    <property type="entry name" value="DNA-DIRECTED RNA POLYMERASE SUBUNIT BETA"/>
    <property type="match status" value="1"/>
</dbReference>
<dbReference type="Pfam" id="PF04997">
    <property type="entry name" value="RNA_pol_Rpb1_1"/>
    <property type="match status" value="1"/>
</dbReference>
<dbReference type="Pfam" id="PF00623">
    <property type="entry name" value="RNA_pol_Rpb1_2"/>
    <property type="match status" value="1"/>
</dbReference>
<dbReference type="Pfam" id="PF04983">
    <property type="entry name" value="RNA_pol_Rpb1_3"/>
    <property type="match status" value="1"/>
</dbReference>
<dbReference type="Pfam" id="PF05000">
    <property type="entry name" value="RNA_pol_Rpb1_4"/>
    <property type="match status" value="1"/>
</dbReference>
<dbReference type="Pfam" id="PF04998">
    <property type="entry name" value="RNA_pol_Rpb1_5"/>
    <property type="match status" value="1"/>
</dbReference>
<dbReference type="SMART" id="SM00663">
    <property type="entry name" value="RPOLA_N"/>
    <property type="match status" value="1"/>
</dbReference>
<dbReference type="SUPFAM" id="SSF64484">
    <property type="entry name" value="beta and beta-prime subunits of DNA dependent RNA-polymerase"/>
    <property type="match status" value="1"/>
</dbReference>
<name>RPOC_EXIS2</name>